<evidence type="ECO:0000269" key="1">
    <source>
    </source>
</evidence>
<evidence type="ECO:0000305" key="2"/>
<evidence type="ECO:0007829" key="3">
    <source>
        <dbReference type="PDB" id="1TO4"/>
    </source>
</evidence>
<evidence type="ECO:0007829" key="4">
    <source>
        <dbReference type="PDB" id="1TO5"/>
    </source>
</evidence>
<keyword id="KW-0002">3D-structure</keyword>
<keyword id="KW-0049">Antioxidant</keyword>
<keyword id="KW-0186">Copper</keyword>
<keyword id="KW-0963">Cytoplasm</keyword>
<keyword id="KW-1015">Disulfide bond</keyword>
<keyword id="KW-0479">Metal-binding</keyword>
<keyword id="KW-0560">Oxidoreductase</keyword>
<keyword id="KW-1185">Reference proteome</keyword>
<keyword id="KW-0862">Zinc</keyword>
<gene>
    <name type="primary">SOD</name>
</gene>
<comment type="function">
    <text>Destroys radicals which are normally produced within the cells and which are toxic to biological systems.</text>
</comment>
<comment type="catalytic activity">
    <reaction>
        <text>2 superoxide + 2 H(+) = H2O2 + O2</text>
        <dbReference type="Rhea" id="RHEA:20696"/>
        <dbReference type="ChEBI" id="CHEBI:15378"/>
        <dbReference type="ChEBI" id="CHEBI:15379"/>
        <dbReference type="ChEBI" id="CHEBI:16240"/>
        <dbReference type="ChEBI" id="CHEBI:18421"/>
        <dbReference type="EC" id="1.15.1.1"/>
    </reaction>
</comment>
<comment type="cofactor">
    <cofactor>
        <name>Cu cation</name>
        <dbReference type="ChEBI" id="CHEBI:23378"/>
    </cofactor>
    <text>Binds 1 copper ion per subunit.</text>
</comment>
<comment type="cofactor">
    <cofactor>
        <name>Zn(2+)</name>
        <dbReference type="ChEBI" id="CHEBI:29105"/>
    </cofactor>
    <text>Binds 1 zinc ion per subunit.</text>
</comment>
<comment type="subunit">
    <text evidence="1">Homodimer.</text>
</comment>
<comment type="subcellular location">
    <subcellularLocation>
        <location>Cytoplasm</location>
    </subcellularLocation>
</comment>
<comment type="similarity">
    <text evidence="2">Belongs to the Cu-Zn superoxide dismutase family.</text>
</comment>
<accession>Q01137</accession>
<organism>
    <name type="scientific">Schistosoma mansoni</name>
    <name type="common">Blood fluke</name>
    <dbReference type="NCBI Taxonomy" id="6183"/>
    <lineage>
        <taxon>Eukaryota</taxon>
        <taxon>Metazoa</taxon>
        <taxon>Spiralia</taxon>
        <taxon>Lophotrochozoa</taxon>
        <taxon>Platyhelminthes</taxon>
        <taxon>Trematoda</taxon>
        <taxon>Digenea</taxon>
        <taxon>Strigeidida</taxon>
        <taxon>Schistosomatoidea</taxon>
        <taxon>Schistosomatidae</taxon>
        <taxon>Schistosoma</taxon>
    </lineage>
</organism>
<proteinExistence type="evidence at protein level"/>
<protein>
    <recommendedName>
        <fullName>Superoxide dismutase [Cu-Zn]</fullName>
        <ecNumber>1.15.1.1</ecNumber>
    </recommendedName>
</protein>
<name>SODC_SCHMA</name>
<reference key="1">
    <citation type="journal article" date="1992" name="Mol. Biochem. Parasitol.">
        <title>Molecular cloning of a 16-kilodalton Cu/Zn superoxide dismutase from Schistosoma mansoni.</title>
        <authorList>
            <person name="da Silva A."/>
            <person name="Lepresle T."/>
            <person name="Capron A."/>
            <person name="Pierce R.J."/>
        </authorList>
    </citation>
    <scope>NUCLEOTIDE SEQUENCE [MRNA]</scope>
</reference>
<reference key="2">
    <citation type="journal article" date="1992" name="Exp. Parasitol.">
        <title>Schistosoma mansoni: cloning of a complementary DNA encoding a cytosolic Cu/Zn superoxide dismutase and high-yield expression of the enzymatically active gene product in Escherichia coli.</title>
        <authorList>
            <person name="Hong Z."/>
            <person name="Loverde P.T."/>
            <person name="Hammarskjold M.L."/>
            <person name="Rekosh D."/>
        </authorList>
    </citation>
    <scope>NUCLEOTIDE SEQUENCE [MRNA]</scope>
</reference>
<reference key="3">
    <citation type="journal article" date="1995" name="Exp. Parasitol.">
        <title>Schistosoma mansoni: cloning and characterization of a gene encoding cytosolic Cu/Zn superoxide dismutase.</title>
        <authorList>
            <person name="Mei H."/>
            <person name="Hirai H."/>
            <person name="Tanaka M."/>
            <person name="Hong Z."/>
            <person name="Rekosh D."/>
            <person name="Loverde P.T."/>
        </authorList>
    </citation>
    <scope>NUCLEOTIDE SEQUENCE [GENOMIC DNA]</scope>
    <source>
        <strain>NMRI</strain>
    </source>
</reference>
<reference key="4">
    <citation type="journal article" date="2004" name="Acta Crystallogr. D">
        <title>Structure of the cytosolic Cu,Zn superoxide dismutase from Schistosoma mansoni.</title>
        <authorList>
            <person name="Cardoso R.M.F."/>
            <person name="Silva C.H.T.P."/>
            <person name="Ulian de Araujo A.P."/>
            <person name="Tanaka T."/>
            <person name="Tanaka M."/>
            <person name="Garratt R.C."/>
        </authorList>
    </citation>
    <scope>X-RAY CRYSTALLOGRAPHY (1.55 ANGSTROMS) IN COMPLEX WITH ZINC AND COPPER IONS</scope>
    <scope>SUBUNIT</scope>
</reference>
<dbReference type="EC" id="1.15.1.1"/>
<dbReference type="EMBL" id="M86867">
    <property type="protein sequence ID" value="AAA29936.1"/>
    <property type="molecule type" value="mRNA"/>
</dbReference>
<dbReference type="EMBL" id="M97298">
    <property type="protein sequence ID" value="AAA29935.1"/>
    <property type="molecule type" value="mRNA"/>
</dbReference>
<dbReference type="EMBL" id="L12159">
    <property type="protein sequence ID" value="AAC14467.1"/>
    <property type="molecule type" value="Genomic_DNA"/>
</dbReference>
<dbReference type="EMBL" id="L12008">
    <property type="protein sequence ID" value="AAC14467.1"/>
    <property type="status" value="JOINED"/>
    <property type="molecule type" value="Genomic_DNA"/>
</dbReference>
<dbReference type="EMBL" id="L12158">
    <property type="protein sequence ID" value="AAC14467.1"/>
    <property type="status" value="JOINED"/>
    <property type="molecule type" value="Genomic_DNA"/>
</dbReference>
<dbReference type="PIR" id="A49241">
    <property type="entry name" value="A49241"/>
</dbReference>
<dbReference type="RefSeq" id="XP_018646947.1">
    <property type="nucleotide sequence ID" value="XM_018795564.1"/>
</dbReference>
<dbReference type="PDB" id="1TO4">
    <property type="method" value="X-ray"/>
    <property type="resolution" value="1.55 A"/>
    <property type="chains" value="A/B/C/D=1-153"/>
</dbReference>
<dbReference type="PDB" id="1TO5">
    <property type="method" value="X-ray"/>
    <property type="resolution" value="2.20 A"/>
    <property type="chains" value="A/B/C/D=1-153"/>
</dbReference>
<dbReference type="PDBsum" id="1TO4"/>
<dbReference type="PDBsum" id="1TO5"/>
<dbReference type="SMR" id="Q01137"/>
<dbReference type="FunCoup" id="Q01137">
    <property type="interactions" value="1226"/>
</dbReference>
<dbReference type="STRING" id="6183.Q01137"/>
<dbReference type="EnsemblMetazoa" id="Smp_176200.1">
    <property type="protein sequence ID" value="Smp_176200.1"/>
    <property type="gene ID" value="Smp_176200"/>
</dbReference>
<dbReference type="KEGG" id="smm:Smp_176200.1"/>
<dbReference type="WBParaSite" id="Smp_176200.1">
    <property type="protein sequence ID" value="Smp_176200.1"/>
    <property type="gene ID" value="Smp_176200"/>
</dbReference>
<dbReference type="CTD" id="8341912"/>
<dbReference type="eggNOG" id="KOG0441">
    <property type="taxonomic scope" value="Eukaryota"/>
</dbReference>
<dbReference type="HOGENOM" id="CLU_056632_4_1_1"/>
<dbReference type="InParanoid" id="Q01137"/>
<dbReference type="OrthoDB" id="2015551at2759"/>
<dbReference type="EvolutionaryTrace" id="Q01137"/>
<dbReference type="Proteomes" id="UP000008854">
    <property type="component" value="Unassembled WGS sequence"/>
</dbReference>
<dbReference type="ExpressionAtlas" id="Q01137">
    <property type="expression patterns" value="differential"/>
</dbReference>
<dbReference type="GO" id="GO:0005737">
    <property type="term" value="C:cytoplasm"/>
    <property type="evidence" value="ECO:0007669"/>
    <property type="project" value="UniProtKB-SubCell"/>
</dbReference>
<dbReference type="GO" id="GO:0005507">
    <property type="term" value="F:copper ion binding"/>
    <property type="evidence" value="ECO:0007669"/>
    <property type="project" value="InterPro"/>
</dbReference>
<dbReference type="GO" id="GO:0004784">
    <property type="term" value="F:superoxide dismutase activity"/>
    <property type="evidence" value="ECO:0007669"/>
    <property type="project" value="UniProtKB-EC"/>
</dbReference>
<dbReference type="CDD" id="cd00305">
    <property type="entry name" value="Cu-Zn_Superoxide_Dismutase"/>
    <property type="match status" value="1"/>
</dbReference>
<dbReference type="FunFam" id="2.60.40.200:FF:000001">
    <property type="entry name" value="Superoxide dismutase [Cu-Zn]"/>
    <property type="match status" value="1"/>
</dbReference>
<dbReference type="Gene3D" id="2.60.40.200">
    <property type="entry name" value="Superoxide dismutase, copper/zinc binding domain"/>
    <property type="match status" value="1"/>
</dbReference>
<dbReference type="InterPro" id="IPR036423">
    <property type="entry name" value="SOD-like_Cu/Zn_dom_sf"/>
</dbReference>
<dbReference type="InterPro" id="IPR024134">
    <property type="entry name" value="SOD_Cu/Zn_/chaperone"/>
</dbReference>
<dbReference type="InterPro" id="IPR018152">
    <property type="entry name" value="SOD_Cu/Zn_BS"/>
</dbReference>
<dbReference type="InterPro" id="IPR001424">
    <property type="entry name" value="SOD_Cu_Zn_dom"/>
</dbReference>
<dbReference type="PANTHER" id="PTHR10003">
    <property type="entry name" value="SUPEROXIDE DISMUTASE CU-ZN -RELATED"/>
    <property type="match status" value="1"/>
</dbReference>
<dbReference type="Pfam" id="PF00080">
    <property type="entry name" value="Sod_Cu"/>
    <property type="match status" value="1"/>
</dbReference>
<dbReference type="PRINTS" id="PR00068">
    <property type="entry name" value="CUZNDISMTASE"/>
</dbReference>
<dbReference type="SUPFAM" id="SSF49329">
    <property type="entry name" value="Cu,Zn superoxide dismutase-like"/>
    <property type="match status" value="1"/>
</dbReference>
<dbReference type="PROSITE" id="PS00087">
    <property type="entry name" value="SOD_CU_ZN_1"/>
    <property type="match status" value="1"/>
</dbReference>
<dbReference type="PROSITE" id="PS00332">
    <property type="entry name" value="SOD_CU_ZN_2"/>
    <property type="match status" value="1"/>
</dbReference>
<sequence length="153" mass="15721">MKAVCVMTGTAGVKGVVKFTQETDNGPVHVHAEFSGLKAGKHGFHVHEFGDTTNGCTSAGAHFNPTKQEHGAPEDSIRHVGDLGNVVAGADGNAVYNATDKLISLNGSHSIIGRTMVIHENEDDLGRGGHELSKVTGNAGGRLACGVIGLAAE</sequence>
<feature type="chain" id="PRO_0000164105" description="Superoxide dismutase [Cu-Zn]">
    <location>
        <begin position="1"/>
        <end position="153"/>
    </location>
</feature>
<feature type="binding site">
    <location>
        <position position="45"/>
    </location>
    <ligand>
        <name>Cu cation</name>
        <dbReference type="ChEBI" id="CHEBI:23378"/>
        <note>catalytic</note>
    </ligand>
</feature>
<feature type="binding site">
    <location>
        <position position="47"/>
    </location>
    <ligand>
        <name>Cu cation</name>
        <dbReference type="ChEBI" id="CHEBI:23378"/>
        <note>catalytic</note>
    </ligand>
</feature>
<feature type="binding site">
    <location>
        <position position="62"/>
    </location>
    <ligand>
        <name>Cu cation</name>
        <dbReference type="ChEBI" id="CHEBI:23378"/>
        <note>catalytic</note>
    </ligand>
</feature>
<feature type="binding site" evidence="1">
    <location>
        <position position="62"/>
    </location>
    <ligand>
        <name>Zn(2+)</name>
        <dbReference type="ChEBI" id="CHEBI:29105"/>
        <note>structural</note>
    </ligand>
</feature>
<feature type="binding site" evidence="1">
    <location>
        <position position="70"/>
    </location>
    <ligand>
        <name>Zn(2+)</name>
        <dbReference type="ChEBI" id="CHEBI:29105"/>
        <note>structural</note>
    </ligand>
</feature>
<feature type="binding site" evidence="1">
    <location>
        <position position="79"/>
    </location>
    <ligand>
        <name>Zn(2+)</name>
        <dbReference type="ChEBI" id="CHEBI:29105"/>
        <note>structural</note>
    </ligand>
</feature>
<feature type="binding site" evidence="1">
    <location>
        <position position="82"/>
    </location>
    <ligand>
        <name>Zn(2+)</name>
        <dbReference type="ChEBI" id="CHEBI:29105"/>
        <note>structural</note>
    </ligand>
</feature>
<feature type="binding site">
    <location>
        <position position="119"/>
    </location>
    <ligand>
        <name>Cu cation</name>
        <dbReference type="ChEBI" id="CHEBI:23378"/>
        <note>catalytic</note>
    </ligand>
</feature>
<feature type="disulfide bond">
    <location>
        <begin position="56"/>
        <end position="145"/>
    </location>
</feature>
<feature type="sequence conflict" description="In Ref. 2; AAA29935." evidence="2" ref="2">
    <original>T</original>
    <variation>S</variation>
    <location>
        <position position="115"/>
    </location>
</feature>
<feature type="sequence conflict" description="In Ref. 2 and 3." evidence="2" ref="2 3">
    <original>I</original>
    <variation>V</variation>
    <location>
        <position position="148"/>
    </location>
</feature>
<feature type="strand" evidence="3">
    <location>
        <begin position="2"/>
        <end position="8"/>
    </location>
</feature>
<feature type="strand" evidence="3">
    <location>
        <begin position="10"/>
        <end position="12"/>
    </location>
</feature>
<feature type="strand" evidence="3">
    <location>
        <begin position="14"/>
        <end position="23"/>
    </location>
</feature>
<feature type="strand" evidence="3">
    <location>
        <begin position="28"/>
        <end position="36"/>
    </location>
</feature>
<feature type="strand" evidence="3">
    <location>
        <begin position="39"/>
        <end position="48"/>
    </location>
</feature>
<feature type="turn" evidence="3">
    <location>
        <begin position="53"/>
        <end position="56"/>
    </location>
</feature>
<feature type="helix" evidence="3">
    <location>
        <begin position="57"/>
        <end position="59"/>
    </location>
</feature>
<feature type="strand" evidence="4">
    <location>
        <begin position="76"/>
        <end position="78"/>
    </location>
</feature>
<feature type="strand" evidence="3">
    <location>
        <begin position="82"/>
        <end position="88"/>
    </location>
</feature>
<feature type="strand" evidence="3">
    <location>
        <begin position="94"/>
        <end position="102"/>
    </location>
</feature>
<feature type="strand" evidence="3">
    <location>
        <begin position="104"/>
        <end position="106"/>
    </location>
</feature>
<feature type="helix" evidence="3">
    <location>
        <begin position="107"/>
        <end position="109"/>
    </location>
</feature>
<feature type="strand" evidence="3">
    <location>
        <begin position="114"/>
        <end position="121"/>
    </location>
</feature>
<feature type="helix" evidence="3">
    <location>
        <begin position="133"/>
        <end position="136"/>
    </location>
</feature>
<feature type="strand" evidence="3">
    <location>
        <begin position="141"/>
        <end position="147"/>
    </location>
</feature>